<gene>
    <name evidence="7" type="primary">RHOXF2B</name>
</gene>
<keyword id="KW-0238">DNA-binding</keyword>
<keyword id="KW-0371">Homeobox</keyword>
<keyword id="KW-0539">Nucleus</keyword>
<keyword id="KW-1267">Proteomics identification</keyword>
<keyword id="KW-1185">Reference proteome</keyword>
<reference key="1">
    <citation type="submission" date="2001-04" db="EMBL/GenBank/DDBJ databases">
        <authorList>
            <person name="Howell G.R."/>
            <person name="Huckle E."/>
            <person name="Ross M.T."/>
        </authorList>
    </citation>
    <scope>NUCLEOTIDE SEQUENCE [MRNA]</scope>
</reference>
<reference key="2">
    <citation type="journal article" date="2005" name="Nature">
        <title>The DNA sequence of the human X chromosome.</title>
        <authorList>
            <person name="Ross M.T."/>
            <person name="Grafham D.V."/>
            <person name="Coffey A.J."/>
            <person name="Scherer S."/>
            <person name="McLay K."/>
            <person name="Muzny D."/>
            <person name="Platzer M."/>
            <person name="Howell G.R."/>
            <person name="Burrows C."/>
            <person name="Bird C.P."/>
            <person name="Frankish A."/>
            <person name="Lovell F.L."/>
            <person name="Howe K.L."/>
            <person name="Ashurst J.L."/>
            <person name="Fulton R.S."/>
            <person name="Sudbrak R."/>
            <person name="Wen G."/>
            <person name="Jones M.C."/>
            <person name="Hurles M.E."/>
            <person name="Andrews T.D."/>
            <person name="Scott C.E."/>
            <person name="Searle S."/>
            <person name="Ramser J."/>
            <person name="Whittaker A."/>
            <person name="Deadman R."/>
            <person name="Carter N.P."/>
            <person name="Hunt S.E."/>
            <person name="Chen R."/>
            <person name="Cree A."/>
            <person name="Gunaratne P."/>
            <person name="Havlak P."/>
            <person name="Hodgson A."/>
            <person name="Metzker M.L."/>
            <person name="Richards S."/>
            <person name="Scott G."/>
            <person name="Steffen D."/>
            <person name="Sodergren E."/>
            <person name="Wheeler D.A."/>
            <person name="Worley K.C."/>
            <person name="Ainscough R."/>
            <person name="Ambrose K.D."/>
            <person name="Ansari-Lari M.A."/>
            <person name="Aradhya S."/>
            <person name="Ashwell R.I."/>
            <person name="Babbage A.K."/>
            <person name="Bagguley C.L."/>
            <person name="Ballabio A."/>
            <person name="Banerjee R."/>
            <person name="Barker G.E."/>
            <person name="Barlow K.F."/>
            <person name="Barrett I.P."/>
            <person name="Bates K.N."/>
            <person name="Beare D.M."/>
            <person name="Beasley H."/>
            <person name="Beasley O."/>
            <person name="Beck A."/>
            <person name="Bethel G."/>
            <person name="Blechschmidt K."/>
            <person name="Brady N."/>
            <person name="Bray-Allen S."/>
            <person name="Bridgeman A.M."/>
            <person name="Brown A.J."/>
            <person name="Brown M.J."/>
            <person name="Bonnin D."/>
            <person name="Bruford E.A."/>
            <person name="Buhay C."/>
            <person name="Burch P."/>
            <person name="Burford D."/>
            <person name="Burgess J."/>
            <person name="Burrill W."/>
            <person name="Burton J."/>
            <person name="Bye J.M."/>
            <person name="Carder C."/>
            <person name="Carrel L."/>
            <person name="Chako J."/>
            <person name="Chapman J.C."/>
            <person name="Chavez D."/>
            <person name="Chen E."/>
            <person name="Chen G."/>
            <person name="Chen Y."/>
            <person name="Chen Z."/>
            <person name="Chinault C."/>
            <person name="Ciccodicola A."/>
            <person name="Clark S.Y."/>
            <person name="Clarke G."/>
            <person name="Clee C.M."/>
            <person name="Clegg S."/>
            <person name="Clerc-Blankenburg K."/>
            <person name="Clifford K."/>
            <person name="Cobley V."/>
            <person name="Cole C.G."/>
            <person name="Conquer J.S."/>
            <person name="Corby N."/>
            <person name="Connor R.E."/>
            <person name="David R."/>
            <person name="Davies J."/>
            <person name="Davis C."/>
            <person name="Davis J."/>
            <person name="Delgado O."/>
            <person name="Deshazo D."/>
            <person name="Dhami P."/>
            <person name="Ding Y."/>
            <person name="Dinh H."/>
            <person name="Dodsworth S."/>
            <person name="Draper H."/>
            <person name="Dugan-Rocha S."/>
            <person name="Dunham A."/>
            <person name="Dunn M."/>
            <person name="Durbin K.J."/>
            <person name="Dutta I."/>
            <person name="Eades T."/>
            <person name="Ellwood M."/>
            <person name="Emery-Cohen A."/>
            <person name="Errington H."/>
            <person name="Evans K.L."/>
            <person name="Faulkner L."/>
            <person name="Francis F."/>
            <person name="Frankland J."/>
            <person name="Fraser A.E."/>
            <person name="Galgoczy P."/>
            <person name="Gilbert J."/>
            <person name="Gill R."/>
            <person name="Gloeckner G."/>
            <person name="Gregory S.G."/>
            <person name="Gribble S."/>
            <person name="Griffiths C."/>
            <person name="Grocock R."/>
            <person name="Gu Y."/>
            <person name="Gwilliam R."/>
            <person name="Hamilton C."/>
            <person name="Hart E.A."/>
            <person name="Hawes A."/>
            <person name="Heath P.D."/>
            <person name="Heitmann K."/>
            <person name="Hennig S."/>
            <person name="Hernandez J."/>
            <person name="Hinzmann B."/>
            <person name="Ho S."/>
            <person name="Hoffs M."/>
            <person name="Howden P.J."/>
            <person name="Huckle E.J."/>
            <person name="Hume J."/>
            <person name="Hunt P.J."/>
            <person name="Hunt A.R."/>
            <person name="Isherwood J."/>
            <person name="Jacob L."/>
            <person name="Johnson D."/>
            <person name="Jones S."/>
            <person name="de Jong P.J."/>
            <person name="Joseph S.S."/>
            <person name="Keenan S."/>
            <person name="Kelly S."/>
            <person name="Kershaw J.K."/>
            <person name="Khan Z."/>
            <person name="Kioschis P."/>
            <person name="Klages S."/>
            <person name="Knights A.J."/>
            <person name="Kosiura A."/>
            <person name="Kovar-Smith C."/>
            <person name="Laird G.K."/>
            <person name="Langford C."/>
            <person name="Lawlor S."/>
            <person name="Leversha M."/>
            <person name="Lewis L."/>
            <person name="Liu W."/>
            <person name="Lloyd C."/>
            <person name="Lloyd D.M."/>
            <person name="Loulseged H."/>
            <person name="Loveland J.E."/>
            <person name="Lovell J.D."/>
            <person name="Lozado R."/>
            <person name="Lu J."/>
            <person name="Lyne R."/>
            <person name="Ma J."/>
            <person name="Maheshwari M."/>
            <person name="Matthews L.H."/>
            <person name="McDowall J."/>
            <person name="McLaren S."/>
            <person name="McMurray A."/>
            <person name="Meidl P."/>
            <person name="Meitinger T."/>
            <person name="Milne S."/>
            <person name="Miner G."/>
            <person name="Mistry S.L."/>
            <person name="Morgan M."/>
            <person name="Morris S."/>
            <person name="Mueller I."/>
            <person name="Mullikin J.C."/>
            <person name="Nguyen N."/>
            <person name="Nordsiek G."/>
            <person name="Nyakatura G."/>
            <person name="O'dell C.N."/>
            <person name="Okwuonu G."/>
            <person name="Palmer S."/>
            <person name="Pandian R."/>
            <person name="Parker D."/>
            <person name="Parrish J."/>
            <person name="Pasternak S."/>
            <person name="Patel D."/>
            <person name="Pearce A.V."/>
            <person name="Pearson D.M."/>
            <person name="Pelan S.E."/>
            <person name="Perez L."/>
            <person name="Porter K.M."/>
            <person name="Ramsey Y."/>
            <person name="Reichwald K."/>
            <person name="Rhodes S."/>
            <person name="Ridler K.A."/>
            <person name="Schlessinger D."/>
            <person name="Schueler M.G."/>
            <person name="Sehra H.K."/>
            <person name="Shaw-Smith C."/>
            <person name="Shen H."/>
            <person name="Sheridan E.M."/>
            <person name="Shownkeen R."/>
            <person name="Skuce C.D."/>
            <person name="Smith M.L."/>
            <person name="Sotheran E.C."/>
            <person name="Steingruber H.E."/>
            <person name="Steward C.A."/>
            <person name="Storey R."/>
            <person name="Swann R.M."/>
            <person name="Swarbreck D."/>
            <person name="Tabor P.E."/>
            <person name="Taudien S."/>
            <person name="Taylor T."/>
            <person name="Teague B."/>
            <person name="Thomas K."/>
            <person name="Thorpe A."/>
            <person name="Timms K."/>
            <person name="Tracey A."/>
            <person name="Trevanion S."/>
            <person name="Tromans A.C."/>
            <person name="d'Urso M."/>
            <person name="Verduzco D."/>
            <person name="Villasana D."/>
            <person name="Waldron L."/>
            <person name="Wall M."/>
            <person name="Wang Q."/>
            <person name="Warren J."/>
            <person name="Warry G.L."/>
            <person name="Wei X."/>
            <person name="West A."/>
            <person name="Whitehead S.L."/>
            <person name="Whiteley M.N."/>
            <person name="Wilkinson J.E."/>
            <person name="Willey D.L."/>
            <person name="Williams G."/>
            <person name="Williams L."/>
            <person name="Williamson A."/>
            <person name="Williamson H."/>
            <person name="Wilming L."/>
            <person name="Woodmansey R.L."/>
            <person name="Wray P.W."/>
            <person name="Yen J."/>
            <person name="Zhang J."/>
            <person name="Zhou J."/>
            <person name="Zoghbi H."/>
            <person name="Zorilla S."/>
            <person name="Buck D."/>
            <person name="Reinhardt R."/>
            <person name="Poustka A."/>
            <person name="Rosenthal A."/>
            <person name="Lehrach H."/>
            <person name="Meindl A."/>
            <person name="Minx P.J."/>
            <person name="Hillier L.W."/>
            <person name="Willard H.F."/>
            <person name="Wilson R.K."/>
            <person name="Waterston R.H."/>
            <person name="Rice C.M."/>
            <person name="Vaudin M."/>
            <person name="Coulson A."/>
            <person name="Nelson D.L."/>
            <person name="Weinstock G."/>
            <person name="Sulston J.E."/>
            <person name="Durbin R.M."/>
            <person name="Hubbard T."/>
            <person name="Gibbs R.A."/>
            <person name="Beck S."/>
            <person name="Rogers J."/>
            <person name="Bentley D.R."/>
        </authorList>
    </citation>
    <scope>NUCLEOTIDE SEQUENCE [LARGE SCALE GENOMIC DNA]</scope>
</reference>
<reference key="3">
    <citation type="journal article" date="2016" name="Hum. Mol. Genet.">
        <title>The human RHOX gene cluster: target genes and functional analysis of gene variants in infertile men.</title>
        <authorList>
            <person name="Borgmann J."/>
            <person name="Tuettelmann F."/>
            <person name="Dworniczak B."/>
            <person name="Roepke A."/>
            <person name="Song H.W."/>
            <person name="Kliesch S."/>
            <person name="Wilkinson M.F."/>
            <person name="Laurentino S."/>
            <person name="Gromoll J."/>
        </authorList>
    </citation>
    <scope>VARIANTS ARG-68; PHE-176; ARG-227 AND GLY-235</scope>
    <scope>CHARACTERIZATION OF VARIANTS ARG-68 AND ARG-227</scope>
    <scope>FUNCTION</scope>
    <scope>CAUTION</scope>
    <scope>TISSUE SPECIFICITY</scope>
</reference>
<organism>
    <name type="scientific">Homo sapiens</name>
    <name type="common">Human</name>
    <dbReference type="NCBI Taxonomy" id="9606"/>
    <lineage>
        <taxon>Eukaryota</taxon>
        <taxon>Metazoa</taxon>
        <taxon>Chordata</taxon>
        <taxon>Craniata</taxon>
        <taxon>Vertebrata</taxon>
        <taxon>Euteleostomi</taxon>
        <taxon>Mammalia</taxon>
        <taxon>Eutheria</taxon>
        <taxon>Euarchontoglires</taxon>
        <taxon>Primates</taxon>
        <taxon>Haplorrhini</taxon>
        <taxon>Catarrhini</taxon>
        <taxon>Hominidae</taxon>
        <taxon>Homo</taxon>
    </lineage>
</organism>
<evidence type="ECO:0000250" key="1"/>
<evidence type="ECO:0000255" key="2">
    <source>
        <dbReference type="PROSITE-ProRule" id="PRU00108"/>
    </source>
</evidence>
<evidence type="ECO:0000256" key="3">
    <source>
        <dbReference type="SAM" id="MobiDB-lite"/>
    </source>
</evidence>
<evidence type="ECO:0000269" key="4">
    <source>
    </source>
</evidence>
<evidence type="ECO:0000305" key="5"/>
<evidence type="ECO:0000305" key="6">
    <source>
    </source>
</evidence>
<evidence type="ECO:0000312" key="7">
    <source>
        <dbReference type="HGNC" id="HGNC:33519"/>
    </source>
</evidence>
<proteinExistence type="evidence at protein level"/>
<dbReference type="EMBL" id="AL590524">
    <property type="protein sequence ID" value="CAC36517.1"/>
    <property type="molecule type" value="mRNA"/>
</dbReference>
<dbReference type="EMBL" id="AC005023">
    <property type="status" value="NOT_ANNOTATED_CDS"/>
    <property type="molecule type" value="Genomic_DNA"/>
</dbReference>
<dbReference type="CCDS" id="CCDS43985.1"/>
<dbReference type="RefSeq" id="NP_001093155.1">
    <property type="nucleotide sequence ID" value="NM_001099685.3"/>
</dbReference>
<dbReference type="SMR" id="P0C7M4"/>
<dbReference type="BioGRID" id="608380">
    <property type="interactions" value="1"/>
</dbReference>
<dbReference type="FunCoup" id="P0C7M4">
    <property type="interactions" value="46"/>
</dbReference>
<dbReference type="STRING" id="9606.ENSP00000360455"/>
<dbReference type="BioMuta" id="RHOXF2B"/>
<dbReference type="DMDM" id="190360188"/>
<dbReference type="jPOST" id="P0C7M4"/>
<dbReference type="MassIVE" id="P0C7M4"/>
<dbReference type="PaxDb" id="9606-ENSP00000360455"/>
<dbReference type="PeptideAtlas" id="P0C7M4"/>
<dbReference type="Antibodypedia" id="68172">
    <property type="antibodies" value="55 antibodies from 11 providers"/>
</dbReference>
<dbReference type="DNASU" id="727940"/>
<dbReference type="Ensembl" id="ENST00000371402.5">
    <property type="protein sequence ID" value="ENSP00000360455.3"/>
    <property type="gene ID" value="ENSG00000203989.5"/>
</dbReference>
<dbReference type="GeneID" id="727940"/>
<dbReference type="KEGG" id="hsa:727940"/>
<dbReference type="MANE-Select" id="ENST00000371402.5">
    <property type="protein sequence ID" value="ENSP00000360455.3"/>
    <property type="RefSeq nucleotide sequence ID" value="NM_001099685.3"/>
    <property type="RefSeq protein sequence ID" value="NP_001093155.1"/>
</dbReference>
<dbReference type="UCSC" id="uc004esj.5">
    <property type="organism name" value="human"/>
</dbReference>
<dbReference type="AGR" id="HGNC:33519"/>
<dbReference type="CTD" id="727940"/>
<dbReference type="DisGeNET" id="727940"/>
<dbReference type="GeneCards" id="RHOXF2B"/>
<dbReference type="HGNC" id="HGNC:33519">
    <property type="gene designation" value="RHOXF2B"/>
</dbReference>
<dbReference type="HPA" id="ENSG00000203989">
    <property type="expression patterns" value="Tissue enriched (testis)"/>
</dbReference>
<dbReference type="neXtProt" id="NX_P0C7M4"/>
<dbReference type="OpenTargets" id="ENSG00000203989"/>
<dbReference type="PharmGKB" id="PA162401289"/>
<dbReference type="VEuPathDB" id="HostDB:ENSG00000203989"/>
<dbReference type="eggNOG" id="KOG0490">
    <property type="taxonomic scope" value="Eukaryota"/>
</dbReference>
<dbReference type="GeneTree" id="ENSGT00940000164624"/>
<dbReference type="HOGENOM" id="CLU_044595_1_0_1"/>
<dbReference type="InParanoid" id="P0C7M4"/>
<dbReference type="OMA" id="HNADANT"/>
<dbReference type="OrthoDB" id="9539450at2759"/>
<dbReference type="PAN-GO" id="P0C7M4">
    <property type="GO annotations" value="3 GO annotations based on evolutionary models"/>
</dbReference>
<dbReference type="PhylomeDB" id="P0C7M4"/>
<dbReference type="TreeFam" id="TF339348"/>
<dbReference type="PathwayCommons" id="P0C7M4"/>
<dbReference type="SignaLink" id="P0C7M4"/>
<dbReference type="BioGRID-ORCS" id="727940">
    <property type="hits" value="23 hits in 688 CRISPR screens"/>
</dbReference>
<dbReference type="GenomeRNAi" id="727940"/>
<dbReference type="Pharos" id="P0C7M4">
    <property type="development level" value="Tdark"/>
</dbReference>
<dbReference type="PRO" id="PR:P0C7M4"/>
<dbReference type="Proteomes" id="UP000005640">
    <property type="component" value="Chromosome X"/>
</dbReference>
<dbReference type="RNAct" id="P0C7M4">
    <property type="molecule type" value="protein"/>
</dbReference>
<dbReference type="Bgee" id="ENSG00000203989">
    <property type="expression patterns" value="Expressed in primordial germ cell in gonad and 49 other cell types or tissues"/>
</dbReference>
<dbReference type="GO" id="GO:0000785">
    <property type="term" value="C:chromatin"/>
    <property type="evidence" value="ECO:0000247"/>
    <property type="project" value="NTNU_SB"/>
</dbReference>
<dbReference type="GO" id="GO:0005634">
    <property type="term" value="C:nucleus"/>
    <property type="evidence" value="ECO:0007669"/>
    <property type="project" value="UniProtKB-SubCell"/>
</dbReference>
<dbReference type="GO" id="GO:0000981">
    <property type="term" value="F:DNA-binding transcription factor activity, RNA polymerase II-specific"/>
    <property type="evidence" value="ECO:0000247"/>
    <property type="project" value="NTNU_SB"/>
</dbReference>
<dbReference type="GO" id="GO:0000977">
    <property type="term" value="F:RNA polymerase II transcription regulatory region sequence-specific DNA binding"/>
    <property type="evidence" value="ECO:0000318"/>
    <property type="project" value="GO_Central"/>
</dbReference>
<dbReference type="GO" id="GO:0010628">
    <property type="term" value="P:positive regulation of gene expression"/>
    <property type="evidence" value="ECO:0000315"/>
    <property type="project" value="UniProtKB"/>
</dbReference>
<dbReference type="GO" id="GO:0006357">
    <property type="term" value="P:regulation of transcription by RNA polymerase II"/>
    <property type="evidence" value="ECO:0000318"/>
    <property type="project" value="GO_Central"/>
</dbReference>
<dbReference type="CDD" id="cd00086">
    <property type="entry name" value="homeodomain"/>
    <property type="match status" value="1"/>
</dbReference>
<dbReference type="FunFam" id="1.10.10.60:FF:000433">
    <property type="entry name" value="Reproductive homeobox 2B"/>
    <property type="match status" value="1"/>
</dbReference>
<dbReference type="Gene3D" id="1.10.10.60">
    <property type="entry name" value="Homeodomain-like"/>
    <property type="match status" value="1"/>
</dbReference>
<dbReference type="InterPro" id="IPR001356">
    <property type="entry name" value="HD"/>
</dbReference>
<dbReference type="InterPro" id="IPR017970">
    <property type="entry name" value="Homeobox_CS"/>
</dbReference>
<dbReference type="InterPro" id="IPR009057">
    <property type="entry name" value="Homeodomain-like_sf"/>
</dbReference>
<dbReference type="PANTHER" id="PTHR47465">
    <property type="entry name" value="MCG113260-RELATED-RELATED"/>
    <property type="match status" value="1"/>
</dbReference>
<dbReference type="Pfam" id="PF00046">
    <property type="entry name" value="Homeodomain"/>
    <property type="match status" value="1"/>
</dbReference>
<dbReference type="SMART" id="SM00389">
    <property type="entry name" value="HOX"/>
    <property type="match status" value="1"/>
</dbReference>
<dbReference type="SUPFAM" id="SSF46689">
    <property type="entry name" value="Homeodomain-like"/>
    <property type="match status" value="1"/>
</dbReference>
<dbReference type="PROSITE" id="PS00027">
    <property type="entry name" value="HOMEOBOX_1"/>
    <property type="match status" value="1"/>
</dbReference>
<dbReference type="PROSITE" id="PS50071">
    <property type="entry name" value="HOMEOBOX_2"/>
    <property type="match status" value="1"/>
</dbReference>
<protein>
    <recommendedName>
        <fullName>Rhox homeobox family member 2B</fullName>
    </recommendedName>
</protein>
<name>RHF2B_HUMAN</name>
<feature type="chain" id="PRO_0000339371" description="Rhox homeobox family member 2B">
    <location>
        <begin position="1"/>
        <end position="288"/>
    </location>
</feature>
<feature type="DNA-binding region" description="Homeobox" evidence="2">
    <location>
        <begin position="134"/>
        <end position="193"/>
    </location>
</feature>
<feature type="region of interest" description="Disordered" evidence="3">
    <location>
        <begin position="16"/>
        <end position="136"/>
    </location>
</feature>
<feature type="short sequence motif" description="Nuclear localization signal" evidence="1">
    <location>
        <begin position="186"/>
        <end position="195"/>
    </location>
</feature>
<feature type="compositionally biased region" description="Acidic residues" evidence="3">
    <location>
        <begin position="39"/>
        <end position="48"/>
    </location>
</feature>
<feature type="compositionally biased region" description="Basic and acidic residues" evidence="3">
    <location>
        <begin position="68"/>
        <end position="80"/>
    </location>
</feature>
<feature type="sequence variant" id="VAR_078301" description="Found in infertile men; uncertain significance; decreased induction of target genes expression; dbSNP:rs781837897." evidence="4">
    <original>G</original>
    <variation>R</variation>
    <location>
        <position position="68"/>
    </location>
</feature>
<feature type="sequence variant" id="VAR_078302" description="Found in infertile men; uncertain significance; dbSNP:rs3764830." evidence="4">
    <original>L</original>
    <variation>F</variation>
    <location>
        <position position="176"/>
    </location>
</feature>
<feature type="sequence variant" id="VAR_078303" description="Found in infertile men; uncertain significance; decreased induction of target genes expression; dbSNP:rs2057153314." evidence="4">
    <original>G</original>
    <variation>R</variation>
    <location>
        <position position="227"/>
    </location>
</feature>
<feature type="sequence variant" id="VAR_078304" description="Found in infertile men; uncertain significance; dbSNP:rs782251394." evidence="4">
    <original>D</original>
    <variation>G</variation>
    <location>
        <position position="235"/>
    </location>
</feature>
<comment type="function">
    <text evidence="4">Transcription factor maybe involved in reproductive processes. Modulates expression of target genes encoding proteins involved in processes relevant to spermatogenesis.</text>
</comment>
<comment type="subcellular location">
    <subcellularLocation>
        <location evidence="2">Nucleus</location>
    </subcellularLocation>
</comment>
<comment type="tissue specificity">
    <text evidence="4">Expressed in testis, mainly expressed in germ cells, but also detected in somatic cells such as Sertoli cells, Leydig cells and peritubular cells.</text>
</comment>
<comment type="developmental stage">
    <text evidence="4">Predominantly expressed in early stage germ cells, type-B spermatogonia and early spermatocytes.</text>
</comment>
<comment type="similarity">
    <text evidence="5">Belongs to the paired-like homeobox family. PEPP subfamily.</text>
</comment>
<comment type="caution">
    <text evidence="6">RHOF2 and RHOF2B are arranged in a head-to-head orientation and share high sequence similarity (&gt;99%). They cannot easily be distinguished and are usually analyzed as a single gene.</text>
</comment>
<accession>P0C7M4</accession>
<sequence>MEPPDQCSQYMTSLLSPAVDDEKELQDMNAMVLSLTEEVKEEEEDAQPEPEQGTAAGEKLKSAGAQGGEEKDGGGEEKDGGGAGVPGHLWEGNLEGTSGSDGNVEDSDQSEKEPGQQYSRPQGAVGGLEPGNAQQPNVHAFTPLQLQELECIFQREQFPSEFLRRRLARSMNVTELAVQIWFENRRAKWRRHQRALMARNMLPFMAVGQPVMVTAAEAITAPLFISGMRDDYFWDHSHSSSLCFPMPPFPPPSLPLPLMLLPPMPPAGQAEFGPFPFVIVPSFTFPNV</sequence>